<proteinExistence type="inferred from homology"/>
<comment type="function">
    <text evidence="1">Catalyzes the GTP-dependent ribosomal translocation step during translation elongation. During this step, the ribosome changes from the pre-translocational (PRE) to the post-translocational (POST) state as the newly formed A-site-bound peptidyl-tRNA and P-site-bound deacylated tRNA move to the P and E sites, respectively. Catalyzes the coordinated movement of the two tRNA molecules, the mRNA and conformational changes in the ribosome (By similarity).</text>
</comment>
<comment type="subcellular location">
    <subcellularLocation>
        <location evidence="1">Cytoplasm</location>
    </subcellularLocation>
</comment>
<comment type="similarity">
    <text evidence="2">Belongs to the TRAFAC class translation factor GTPase superfamily. Classic translation factor GTPase family. EF-G/EF-2 subfamily.</text>
</comment>
<evidence type="ECO:0000250" key="1"/>
<evidence type="ECO:0000305" key="2"/>
<feature type="chain" id="PRO_0000091105" description="Elongation factor G">
    <location>
        <begin position="1"/>
        <end position="694"/>
    </location>
</feature>
<feature type="domain" description="tr-type G">
    <location>
        <begin position="9"/>
        <end position="288"/>
    </location>
</feature>
<feature type="binding site" evidence="1">
    <location>
        <begin position="18"/>
        <end position="25"/>
    </location>
    <ligand>
        <name>GTP</name>
        <dbReference type="ChEBI" id="CHEBI:37565"/>
    </ligand>
</feature>
<feature type="binding site" evidence="1">
    <location>
        <begin position="82"/>
        <end position="86"/>
    </location>
    <ligand>
        <name>GTP</name>
        <dbReference type="ChEBI" id="CHEBI:37565"/>
    </ligand>
</feature>
<feature type="binding site" evidence="1">
    <location>
        <begin position="136"/>
        <end position="139"/>
    </location>
    <ligand>
        <name>GTP</name>
        <dbReference type="ChEBI" id="CHEBI:37565"/>
    </ligand>
</feature>
<protein>
    <recommendedName>
        <fullName>Elongation factor G</fullName>
        <shortName>EF-G</shortName>
    </recommendedName>
</protein>
<accession>O84444</accession>
<dbReference type="EMBL" id="AE001273">
    <property type="protein sequence ID" value="AAC68036.1"/>
    <property type="molecule type" value="Genomic_DNA"/>
</dbReference>
<dbReference type="PIR" id="F71514">
    <property type="entry name" value="F71514"/>
</dbReference>
<dbReference type="RefSeq" id="NP_219949.1">
    <property type="nucleotide sequence ID" value="NC_000117.1"/>
</dbReference>
<dbReference type="RefSeq" id="WP_009871792.1">
    <property type="nucleotide sequence ID" value="NC_000117.1"/>
</dbReference>
<dbReference type="SMR" id="O84444"/>
<dbReference type="FunCoup" id="O84444">
    <property type="interactions" value="280"/>
</dbReference>
<dbReference type="STRING" id="272561.CT_437"/>
<dbReference type="EnsemblBacteria" id="AAC68036">
    <property type="protein sequence ID" value="AAC68036"/>
    <property type="gene ID" value="CT_437"/>
</dbReference>
<dbReference type="GeneID" id="884230"/>
<dbReference type="KEGG" id="ctr:CT_437"/>
<dbReference type="PATRIC" id="fig|272561.5.peg.472"/>
<dbReference type="HOGENOM" id="CLU_002794_4_1_0"/>
<dbReference type="InParanoid" id="O84444"/>
<dbReference type="OrthoDB" id="9801591at2"/>
<dbReference type="Proteomes" id="UP000000431">
    <property type="component" value="Chromosome"/>
</dbReference>
<dbReference type="GO" id="GO:0005737">
    <property type="term" value="C:cytoplasm"/>
    <property type="evidence" value="ECO:0007669"/>
    <property type="project" value="UniProtKB-SubCell"/>
</dbReference>
<dbReference type="GO" id="GO:0005525">
    <property type="term" value="F:GTP binding"/>
    <property type="evidence" value="ECO:0007669"/>
    <property type="project" value="UniProtKB-UniRule"/>
</dbReference>
<dbReference type="GO" id="GO:0003924">
    <property type="term" value="F:GTPase activity"/>
    <property type="evidence" value="ECO:0007669"/>
    <property type="project" value="InterPro"/>
</dbReference>
<dbReference type="GO" id="GO:0003746">
    <property type="term" value="F:translation elongation factor activity"/>
    <property type="evidence" value="ECO:0007669"/>
    <property type="project" value="UniProtKB-UniRule"/>
</dbReference>
<dbReference type="GO" id="GO:0032790">
    <property type="term" value="P:ribosome disassembly"/>
    <property type="evidence" value="ECO:0000318"/>
    <property type="project" value="GO_Central"/>
</dbReference>
<dbReference type="CDD" id="cd01886">
    <property type="entry name" value="EF-G"/>
    <property type="match status" value="1"/>
</dbReference>
<dbReference type="CDD" id="cd16262">
    <property type="entry name" value="EFG_III"/>
    <property type="match status" value="1"/>
</dbReference>
<dbReference type="CDD" id="cd01434">
    <property type="entry name" value="EFG_mtEFG1_IV"/>
    <property type="match status" value="1"/>
</dbReference>
<dbReference type="CDD" id="cd03713">
    <property type="entry name" value="EFG_mtEFG_C"/>
    <property type="match status" value="1"/>
</dbReference>
<dbReference type="CDD" id="cd04088">
    <property type="entry name" value="EFG_mtEFG_II"/>
    <property type="match status" value="1"/>
</dbReference>
<dbReference type="FunFam" id="2.40.30.10:FF:000006">
    <property type="entry name" value="Elongation factor G"/>
    <property type="match status" value="1"/>
</dbReference>
<dbReference type="FunFam" id="3.30.230.10:FF:000003">
    <property type="entry name" value="Elongation factor G"/>
    <property type="match status" value="1"/>
</dbReference>
<dbReference type="FunFam" id="3.30.70.240:FF:000001">
    <property type="entry name" value="Elongation factor G"/>
    <property type="match status" value="1"/>
</dbReference>
<dbReference type="FunFam" id="3.30.70.870:FF:000001">
    <property type="entry name" value="Elongation factor G"/>
    <property type="match status" value="1"/>
</dbReference>
<dbReference type="FunFam" id="3.40.50.300:FF:000029">
    <property type="entry name" value="Elongation factor G"/>
    <property type="match status" value="1"/>
</dbReference>
<dbReference type="Gene3D" id="3.30.230.10">
    <property type="match status" value="1"/>
</dbReference>
<dbReference type="Gene3D" id="3.30.70.240">
    <property type="match status" value="1"/>
</dbReference>
<dbReference type="Gene3D" id="3.30.70.870">
    <property type="entry name" value="Elongation Factor G (Translational Gtpase), domain 3"/>
    <property type="match status" value="1"/>
</dbReference>
<dbReference type="Gene3D" id="3.40.50.300">
    <property type="entry name" value="P-loop containing nucleotide triphosphate hydrolases"/>
    <property type="match status" value="1"/>
</dbReference>
<dbReference type="Gene3D" id="2.40.30.10">
    <property type="entry name" value="Translation factors"/>
    <property type="match status" value="1"/>
</dbReference>
<dbReference type="HAMAP" id="MF_00054_B">
    <property type="entry name" value="EF_G_EF_2_B"/>
    <property type="match status" value="1"/>
</dbReference>
<dbReference type="InterPro" id="IPR041095">
    <property type="entry name" value="EFG_II"/>
</dbReference>
<dbReference type="InterPro" id="IPR009022">
    <property type="entry name" value="EFG_III"/>
</dbReference>
<dbReference type="InterPro" id="IPR035647">
    <property type="entry name" value="EFG_III/V"/>
</dbReference>
<dbReference type="InterPro" id="IPR047872">
    <property type="entry name" value="EFG_IV"/>
</dbReference>
<dbReference type="InterPro" id="IPR035649">
    <property type="entry name" value="EFG_V"/>
</dbReference>
<dbReference type="InterPro" id="IPR000640">
    <property type="entry name" value="EFG_V-like"/>
</dbReference>
<dbReference type="InterPro" id="IPR004161">
    <property type="entry name" value="EFTu-like_2"/>
</dbReference>
<dbReference type="InterPro" id="IPR031157">
    <property type="entry name" value="G_TR_CS"/>
</dbReference>
<dbReference type="InterPro" id="IPR027417">
    <property type="entry name" value="P-loop_NTPase"/>
</dbReference>
<dbReference type="InterPro" id="IPR020568">
    <property type="entry name" value="Ribosomal_Su5_D2-typ_SF"/>
</dbReference>
<dbReference type="InterPro" id="IPR014721">
    <property type="entry name" value="Ribsml_uS5_D2-typ_fold_subgr"/>
</dbReference>
<dbReference type="InterPro" id="IPR005225">
    <property type="entry name" value="Small_GTP-bd"/>
</dbReference>
<dbReference type="InterPro" id="IPR000795">
    <property type="entry name" value="T_Tr_GTP-bd_dom"/>
</dbReference>
<dbReference type="InterPro" id="IPR009000">
    <property type="entry name" value="Transl_B-barrel_sf"/>
</dbReference>
<dbReference type="InterPro" id="IPR004540">
    <property type="entry name" value="Transl_elong_EFG/EF2"/>
</dbReference>
<dbReference type="InterPro" id="IPR005517">
    <property type="entry name" value="Transl_elong_EFG/EF2_IV"/>
</dbReference>
<dbReference type="NCBIfam" id="TIGR00484">
    <property type="entry name" value="EF-G"/>
    <property type="match status" value="1"/>
</dbReference>
<dbReference type="NCBIfam" id="NF009381">
    <property type="entry name" value="PRK12740.1-5"/>
    <property type="match status" value="1"/>
</dbReference>
<dbReference type="NCBIfam" id="TIGR00231">
    <property type="entry name" value="small_GTP"/>
    <property type="match status" value="1"/>
</dbReference>
<dbReference type="PANTHER" id="PTHR43261:SF1">
    <property type="entry name" value="RIBOSOME-RELEASING FACTOR 2, MITOCHONDRIAL"/>
    <property type="match status" value="1"/>
</dbReference>
<dbReference type="PANTHER" id="PTHR43261">
    <property type="entry name" value="TRANSLATION ELONGATION FACTOR G-RELATED"/>
    <property type="match status" value="1"/>
</dbReference>
<dbReference type="Pfam" id="PF00679">
    <property type="entry name" value="EFG_C"/>
    <property type="match status" value="1"/>
</dbReference>
<dbReference type="Pfam" id="PF14492">
    <property type="entry name" value="EFG_III"/>
    <property type="match status" value="1"/>
</dbReference>
<dbReference type="Pfam" id="PF03764">
    <property type="entry name" value="EFG_IV"/>
    <property type="match status" value="1"/>
</dbReference>
<dbReference type="Pfam" id="PF00009">
    <property type="entry name" value="GTP_EFTU"/>
    <property type="match status" value="1"/>
</dbReference>
<dbReference type="Pfam" id="PF03144">
    <property type="entry name" value="GTP_EFTU_D2"/>
    <property type="match status" value="1"/>
</dbReference>
<dbReference type="PRINTS" id="PR00315">
    <property type="entry name" value="ELONGATNFCT"/>
</dbReference>
<dbReference type="SMART" id="SM00838">
    <property type="entry name" value="EFG_C"/>
    <property type="match status" value="1"/>
</dbReference>
<dbReference type="SMART" id="SM00889">
    <property type="entry name" value="EFG_IV"/>
    <property type="match status" value="1"/>
</dbReference>
<dbReference type="SUPFAM" id="SSF54980">
    <property type="entry name" value="EF-G C-terminal domain-like"/>
    <property type="match status" value="2"/>
</dbReference>
<dbReference type="SUPFAM" id="SSF52540">
    <property type="entry name" value="P-loop containing nucleoside triphosphate hydrolases"/>
    <property type="match status" value="1"/>
</dbReference>
<dbReference type="SUPFAM" id="SSF54211">
    <property type="entry name" value="Ribosomal protein S5 domain 2-like"/>
    <property type="match status" value="1"/>
</dbReference>
<dbReference type="SUPFAM" id="SSF50447">
    <property type="entry name" value="Translation proteins"/>
    <property type="match status" value="1"/>
</dbReference>
<dbReference type="PROSITE" id="PS00301">
    <property type="entry name" value="G_TR_1"/>
    <property type="match status" value="1"/>
</dbReference>
<dbReference type="PROSITE" id="PS51722">
    <property type="entry name" value="G_TR_2"/>
    <property type="match status" value="1"/>
</dbReference>
<name>EFG_CHLTR</name>
<keyword id="KW-0963">Cytoplasm</keyword>
<keyword id="KW-0251">Elongation factor</keyword>
<keyword id="KW-0342">GTP-binding</keyword>
<keyword id="KW-0547">Nucleotide-binding</keyword>
<keyword id="KW-0648">Protein biosynthesis</keyword>
<keyword id="KW-1185">Reference proteome</keyword>
<organism>
    <name type="scientific">Chlamydia trachomatis serovar D (strain ATCC VR-885 / DSM 19411 / UW-3/Cx)</name>
    <dbReference type="NCBI Taxonomy" id="272561"/>
    <lineage>
        <taxon>Bacteria</taxon>
        <taxon>Pseudomonadati</taxon>
        <taxon>Chlamydiota</taxon>
        <taxon>Chlamydiia</taxon>
        <taxon>Chlamydiales</taxon>
        <taxon>Chlamydiaceae</taxon>
        <taxon>Chlamydia/Chlamydophila group</taxon>
        <taxon>Chlamydia</taxon>
    </lineage>
</organism>
<reference key="1">
    <citation type="journal article" date="1998" name="Science">
        <title>Genome sequence of an obligate intracellular pathogen of humans: Chlamydia trachomatis.</title>
        <authorList>
            <person name="Stephens R.S."/>
            <person name="Kalman S."/>
            <person name="Lammel C.J."/>
            <person name="Fan J."/>
            <person name="Marathe R."/>
            <person name="Aravind L."/>
            <person name="Mitchell W.P."/>
            <person name="Olinger L."/>
            <person name="Tatusov R.L."/>
            <person name="Zhao Q."/>
            <person name="Koonin E.V."/>
            <person name="Davis R.W."/>
        </authorList>
    </citation>
    <scope>NUCLEOTIDE SEQUENCE [LARGE SCALE GENOMIC DNA]</scope>
    <source>
        <strain>ATCC VR-885 / DSM 19411 / UW-3/Cx</strain>
    </source>
</reference>
<gene>
    <name type="primary">fusA</name>
    <name type="ordered locus">CT_437</name>
</gene>
<sequence length="694" mass="76538">MSDQEFGLDAIRNIGIMAHIDAGKTTTTERILFYAGRTHKIGEVHEGGATMDWMEQEQERGITITSAATTVFWLGAKINIIDTPGHVDFTIEVERSLRVLDGAVAVFDAVSGVEPQSETVWRQANKYGVPRIAFVNKMDRMGANYFGAIESMREKLGANAIPVHCPIGSESQFVGMVDLISQKTLYFLEETLGAKWEEREIPEDLQEQCATLRMQLLEELATVDESNEAFMEKVLENPDSITEEEIHTVMRKGVIEGKINPVLCGSAFKNKGVQQLLDVIVKWLPSPLDRGNVRGINLKTGEEVSLKPSKDGPLAALAFKIMTDPYVGRITFIRIYSGTLKKGSAILNSTKDKKERISRLLEMHANERTDRDEFTVGDIGACVGLKFSVTGDTLCDENQEIVLERIEAPEPVIDMAIEPKSKGDREKLAQALSALSEEDPTFRVSTNEETGQTIISGMGELHLDILRDRMIREFRVEANVGKPQVSYKETITKTSNSETKYVKQSGGRGQYAHVCLEIEPNEPGKGNEVVSKIVGGVIPKEYIPAVIKGVEEGLNSGVLAGYGLVDVKVSIVFGSYHEVDSSEMAFKICGSMAVKEACRKALPVILEPIMKVTVITPEDHLGDVIGDLNRRRGKILGQESSRNMAQVSAEVPLSEMFGYMTSLRSLTSGRATSTMEPAFFAKVPQKIQEEIVKK</sequence>